<sequence>MAHKKGGGSTKNGRDSNPKYLGVKAAGGSTVAAGTIILRQRGTVIKPGMNAGLGRDHTIFALIDGVVTFRNGRNNKKQVNILPC</sequence>
<evidence type="ECO:0000255" key="1">
    <source>
        <dbReference type="HAMAP-Rule" id="MF_00539"/>
    </source>
</evidence>
<evidence type="ECO:0000256" key="2">
    <source>
        <dbReference type="SAM" id="MobiDB-lite"/>
    </source>
</evidence>
<evidence type="ECO:0000305" key="3"/>
<keyword id="KW-1185">Reference proteome</keyword>
<keyword id="KW-0687">Ribonucleoprotein</keyword>
<keyword id="KW-0689">Ribosomal protein</keyword>
<gene>
    <name evidence="1" type="primary">rpmA</name>
    <name type="ordered locus">Ppha_1030</name>
</gene>
<dbReference type="EMBL" id="CP001110">
    <property type="protein sequence ID" value="ACF43314.1"/>
    <property type="molecule type" value="Genomic_DNA"/>
</dbReference>
<dbReference type="RefSeq" id="WP_012507808.1">
    <property type="nucleotide sequence ID" value="NC_011060.1"/>
</dbReference>
<dbReference type="SMR" id="B4SFQ9"/>
<dbReference type="STRING" id="324925.Ppha_1030"/>
<dbReference type="KEGG" id="pph:Ppha_1030"/>
<dbReference type="eggNOG" id="COG0211">
    <property type="taxonomic scope" value="Bacteria"/>
</dbReference>
<dbReference type="HOGENOM" id="CLU_095424_4_0_10"/>
<dbReference type="OrthoDB" id="9803474at2"/>
<dbReference type="Proteomes" id="UP000002724">
    <property type="component" value="Chromosome"/>
</dbReference>
<dbReference type="GO" id="GO:1990904">
    <property type="term" value="C:ribonucleoprotein complex"/>
    <property type="evidence" value="ECO:0007669"/>
    <property type="project" value="UniProtKB-KW"/>
</dbReference>
<dbReference type="GO" id="GO:0005840">
    <property type="term" value="C:ribosome"/>
    <property type="evidence" value="ECO:0007669"/>
    <property type="project" value="UniProtKB-KW"/>
</dbReference>
<dbReference type="GO" id="GO:0003735">
    <property type="term" value="F:structural constituent of ribosome"/>
    <property type="evidence" value="ECO:0007669"/>
    <property type="project" value="InterPro"/>
</dbReference>
<dbReference type="GO" id="GO:0006412">
    <property type="term" value="P:translation"/>
    <property type="evidence" value="ECO:0007669"/>
    <property type="project" value="UniProtKB-UniRule"/>
</dbReference>
<dbReference type="FunFam" id="2.40.50.100:FF:000020">
    <property type="entry name" value="50S ribosomal protein L27"/>
    <property type="match status" value="1"/>
</dbReference>
<dbReference type="Gene3D" id="2.40.50.100">
    <property type="match status" value="1"/>
</dbReference>
<dbReference type="HAMAP" id="MF_00539">
    <property type="entry name" value="Ribosomal_bL27"/>
    <property type="match status" value="1"/>
</dbReference>
<dbReference type="InterPro" id="IPR001684">
    <property type="entry name" value="Ribosomal_bL27"/>
</dbReference>
<dbReference type="InterPro" id="IPR018261">
    <property type="entry name" value="Ribosomal_bL27_CS"/>
</dbReference>
<dbReference type="NCBIfam" id="TIGR00062">
    <property type="entry name" value="L27"/>
    <property type="match status" value="1"/>
</dbReference>
<dbReference type="PANTHER" id="PTHR15893:SF0">
    <property type="entry name" value="LARGE RIBOSOMAL SUBUNIT PROTEIN BL27M"/>
    <property type="match status" value="1"/>
</dbReference>
<dbReference type="PANTHER" id="PTHR15893">
    <property type="entry name" value="RIBOSOMAL PROTEIN L27"/>
    <property type="match status" value="1"/>
</dbReference>
<dbReference type="Pfam" id="PF01016">
    <property type="entry name" value="Ribosomal_L27"/>
    <property type="match status" value="1"/>
</dbReference>
<dbReference type="PRINTS" id="PR00063">
    <property type="entry name" value="RIBOSOMALL27"/>
</dbReference>
<dbReference type="SUPFAM" id="SSF110324">
    <property type="entry name" value="Ribosomal L27 protein-like"/>
    <property type="match status" value="1"/>
</dbReference>
<dbReference type="PROSITE" id="PS00831">
    <property type="entry name" value="RIBOSOMAL_L27"/>
    <property type="match status" value="1"/>
</dbReference>
<accession>B4SFQ9</accession>
<name>RL27_PELPB</name>
<feature type="chain" id="PRO_1000128784" description="Large ribosomal subunit protein bL27">
    <location>
        <begin position="1"/>
        <end position="84"/>
    </location>
</feature>
<feature type="region of interest" description="Disordered" evidence="2">
    <location>
        <begin position="1"/>
        <end position="21"/>
    </location>
</feature>
<proteinExistence type="inferred from homology"/>
<organism>
    <name type="scientific">Pelodictyon phaeoclathratiforme (strain DSM 5477 / BU-1)</name>
    <dbReference type="NCBI Taxonomy" id="324925"/>
    <lineage>
        <taxon>Bacteria</taxon>
        <taxon>Pseudomonadati</taxon>
        <taxon>Chlorobiota</taxon>
        <taxon>Chlorobiia</taxon>
        <taxon>Chlorobiales</taxon>
        <taxon>Chlorobiaceae</taxon>
        <taxon>Chlorobium/Pelodictyon group</taxon>
        <taxon>Pelodictyon</taxon>
    </lineage>
</organism>
<reference key="1">
    <citation type="submission" date="2008-06" db="EMBL/GenBank/DDBJ databases">
        <title>Complete sequence of Pelodictyon phaeoclathratiforme BU-1.</title>
        <authorList>
            <consortium name="US DOE Joint Genome Institute"/>
            <person name="Lucas S."/>
            <person name="Copeland A."/>
            <person name="Lapidus A."/>
            <person name="Glavina del Rio T."/>
            <person name="Dalin E."/>
            <person name="Tice H."/>
            <person name="Bruce D."/>
            <person name="Goodwin L."/>
            <person name="Pitluck S."/>
            <person name="Schmutz J."/>
            <person name="Larimer F."/>
            <person name="Land M."/>
            <person name="Hauser L."/>
            <person name="Kyrpides N."/>
            <person name="Mikhailova N."/>
            <person name="Liu Z."/>
            <person name="Li T."/>
            <person name="Zhao F."/>
            <person name="Overmann J."/>
            <person name="Bryant D.A."/>
            <person name="Richardson P."/>
        </authorList>
    </citation>
    <scope>NUCLEOTIDE SEQUENCE [LARGE SCALE GENOMIC DNA]</scope>
    <source>
        <strain>DSM 5477 / BU-1</strain>
    </source>
</reference>
<protein>
    <recommendedName>
        <fullName evidence="1">Large ribosomal subunit protein bL27</fullName>
    </recommendedName>
    <alternativeName>
        <fullName evidence="3">50S ribosomal protein L27</fullName>
    </alternativeName>
</protein>
<comment type="similarity">
    <text evidence="1">Belongs to the bacterial ribosomal protein bL27 family.</text>
</comment>